<evidence type="ECO:0000255" key="1">
    <source>
        <dbReference type="HAMAP-Rule" id="MF_01953"/>
    </source>
</evidence>
<proteinExistence type="inferred from homology"/>
<keyword id="KW-0963">Cytoplasm</keyword>
<keyword id="KW-0378">Hydrolase</keyword>
<keyword id="KW-0479">Metal-binding</keyword>
<keyword id="KW-0533">Nickel</keyword>
<keyword id="KW-1185">Reference proteome</keyword>
<sequence length="571" mass="60969">MFSMSRKQHASMYGPTTGDRLRLADTGLFAEIEEDLTIAGEEAVFGGGKVVRVGMGQNGHRTREEDPDIPDTVITNVIVLDWSGIYKADIGIRDGIITGIGHAGNPDTMDGGTIPIGVSTDIIAGEGKVLTAGGIDTHIHFISPEQIEAALVSGITTMIGGGTGPSESTKATTITPGPWHIHQMLRSLDGFPMNIGLLGKGHATASAPLIDQIRAGAIGLKVHEDWGATPATIDLSLSVADEFDIQVAVHTDTLNEAGFVESTREAIGGRVIHTFHTEGAGGGHAPDIIALAGEPNVLPASTNPTLPYTVNTVEEHLDMLMVCHHLNPDVPEDVAFADSRIRTETIAAEDVLHDMGIFSITSSDSQAMGRVGEVIIRTWQVADSMKRQRGPLEGDTADSDNNRIKRYVAKYTINPALAQGISHVVGSVETGKFADLVLWEPKFFGVKPFMILKGGQVVNSIMGDAGASIPTPQPELYRPMFGSYGSATSSNSITFLPRVAIAAGIPEQLGLNRRIEECHGIRTLTKQSLKLNGETPSIHVDPETYEVRIDGALITCEPAEKLPLAQRYFLF</sequence>
<organism>
    <name type="scientific">Corynebacterium efficiens (strain DSM 44549 / YS-314 / AJ 12310 / JCM 11189 / NBRC 100395)</name>
    <dbReference type="NCBI Taxonomy" id="196164"/>
    <lineage>
        <taxon>Bacteria</taxon>
        <taxon>Bacillati</taxon>
        <taxon>Actinomycetota</taxon>
        <taxon>Actinomycetes</taxon>
        <taxon>Mycobacteriales</taxon>
        <taxon>Corynebacteriaceae</taxon>
        <taxon>Corynebacterium</taxon>
    </lineage>
</organism>
<dbReference type="EC" id="3.5.1.5" evidence="1"/>
<dbReference type="EMBL" id="BA000035">
    <property type="protein sequence ID" value="BAC17805.1"/>
    <property type="molecule type" value="Genomic_DNA"/>
</dbReference>
<dbReference type="RefSeq" id="WP_006770040.1">
    <property type="nucleotide sequence ID" value="NC_004369.1"/>
</dbReference>
<dbReference type="SMR" id="Q8FQX2"/>
<dbReference type="STRING" id="196164.gene:10741401"/>
<dbReference type="MEROPS" id="M38.982"/>
<dbReference type="KEGG" id="cef:CE0995"/>
<dbReference type="eggNOG" id="COG0804">
    <property type="taxonomic scope" value="Bacteria"/>
</dbReference>
<dbReference type="HOGENOM" id="CLU_000980_0_0_11"/>
<dbReference type="OrthoDB" id="9802793at2"/>
<dbReference type="UniPathway" id="UPA00258">
    <property type="reaction ID" value="UER00370"/>
</dbReference>
<dbReference type="Proteomes" id="UP000001409">
    <property type="component" value="Chromosome"/>
</dbReference>
<dbReference type="GO" id="GO:0005737">
    <property type="term" value="C:cytoplasm"/>
    <property type="evidence" value="ECO:0007669"/>
    <property type="project" value="UniProtKB-SubCell"/>
</dbReference>
<dbReference type="GO" id="GO:0016151">
    <property type="term" value="F:nickel cation binding"/>
    <property type="evidence" value="ECO:0007669"/>
    <property type="project" value="UniProtKB-UniRule"/>
</dbReference>
<dbReference type="GO" id="GO:0009039">
    <property type="term" value="F:urease activity"/>
    <property type="evidence" value="ECO:0007669"/>
    <property type="project" value="UniProtKB-UniRule"/>
</dbReference>
<dbReference type="GO" id="GO:0043419">
    <property type="term" value="P:urea catabolic process"/>
    <property type="evidence" value="ECO:0007669"/>
    <property type="project" value="UniProtKB-UniRule"/>
</dbReference>
<dbReference type="CDD" id="cd00375">
    <property type="entry name" value="Urease_alpha"/>
    <property type="match status" value="1"/>
</dbReference>
<dbReference type="Gene3D" id="3.20.20.140">
    <property type="entry name" value="Metal-dependent hydrolases"/>
    <property type="match status" value="1"/>
</dbReference>
<dbReference type="Gene3D" id="2.30.40.10">
    <property type="entry name" value="Urease, subunit C, domain 1"/>
    <property type="match status" value="1"/>
</dbReference>
<dbReference type="HAMAP" id="MF_01953">
    <property type="entry name" value="Urease_alpha"/>
    <property type="match status" value="1"/>
</dbReference>
<dbReference type="InterPro" id="IPR006680">
    <property type="entry name" value="Amidohydro-rel"/>
</dbReference>
<dbReference type="InterPro" id="IPR011059">
    <property type="entry name" value="Metal-dep_hydrolase_composite"/>
</dbReference>
<dbReference type="InterPro" id="IPR032466">
    <property type="entry name" value="Metal_Hydrolase"/>
</dbReference>
<dbReference type="InterPro" id="IPR011612">
    <property type="entry name" value="Urease_alpha_N_dom"/>
</dbReference>
<dbReference type="InterPro" id="IPR050112">
    <property type="entry name" value="Urease_alpha_subunit"/>
</dbReference>
<dbReference type="InterPro" id="IPR017950">
    <property type="entry name" value="Urease_AS"/>
</dbReference>
<dbReference type="InterPro" id="IPR005848">
    <property type="entry name" value="Urease_asu"/>
</dbReference>
<dbReference type="InterPro" id="IPR017951">
    <property type="entry name" value="Urease_asu_c"/>
</dbReference>
<dbReference type="InterPro" id="IPR029754">
    <property type="entry name" value="Urease_Ni-bd"/>
</dbReference>
<dbReference type="NCBIfam" id="NF009686">
    <property type="entry name" value="PRK13207.1"/>
    <property type="match status" value="1"/>
</dbReference>
<dbReference type="NCBIfam" id="TIGR01792">
    <property type="entry name" value="urease_alph"/>
    <property type="match status" value="1"/>
</dbReference>
<dbReference type="PANTHER" id="PTHR43440">
    <property type="entry name" value="UREASE"/>
    <property type="match status" value="1"/>
</dbReference>
<dbReference type="PANTHER" id="PTHR43440:SF1">
    <property type="entry name" value="UREASE"/>
    <property type="match status" value="1"/>
</dbReference>
<dbReference type="Pfam" id="PF01979">
    <property type="entry name" value="Amidohydro_1"/>
    <property type="match status" value="1"/>
</dbReference>
<dbReference type="Pfam" id="PF00449">
    <property type="entry name" value="Urease_alpha"/>
    <property type="match status" value="1"/>
</dbReference>
<dbReference type="PRINTS" id="PR01752">
    <property type="entry name" value="UREASE"/>
</dbReference>
<dbReference type="SUPFAM" id="SSF51338">
    <property type="entry name" value="Composite domain of metallo-dependent hydrolases"/>
    <property type="match status" value="2"/>
</dbReference>
<dbReference type="SUPFAM" id="SSF51556">
    <property type="entry name" value="Metallo-dependent hydrolases"/>
    <property type="match status" value="1"/>
</dbReference>
<dbReference type="PROSITE" id="PS01120">
    <property type="entry name" value="UREASE_1"/>
    <property type="match status" value="1"/>
</dbReference>
<dbReference type="PROSITE" id="PS00145">
    <property type="entry name" value="UREASE_2"/>
    <property type="match status" value="1"/>
</dbReference>
<dbReference type="PROSITE" id="PS51368">
    <property type="entry name" value="UREASE_3"/>
    <property type="match status" value="1"/>
</dbReference>
<accession>Q8FQX2</accession>
<gene>
    <name evidence="1" type="primary">ureC</name>
    <name type="ordered locus">CE0995</name>
</gene>
<protein>
    <recommendedName>
        <fullName evidence="1">Urease subunit alpha</fullName>
        <ecNumber evidence="1">3.5.1.5</ecNumber>
    </recommendedName>
    <alternativeName>
        <fullName evidence="1">Urea amidohydrolase subunit alpha</fullName>
    </alternativeName>
</protein>
<feature type="chain" id="PRO_0000234151" description="Urease subunit alpha">
    <location>
        <begin position="1"/>
        <end position="571"/>
    </location>
</feature>
<feature type="domain" description="Urease" evidence="1">
    <location>
        <begin position="133"/>
        <end position="571"/>
    </location>
</feature>
<feature type="active site" description="Proton donor" evidence="1">
    <location>
        <position position="324"/>
    </location>
</feature>
<feature type="binding site" evidence="1">
    <location>
        <position position="138"/>
    </location>
    <ligand>
        <name>Ni(2+)</name>
        <dbReference type="ChEBI" id="CHEBI:49786"/>
        <label>1</label>
    </ligand>
</feature>
<feature type="binding site" evidence="1">
    <location>
        <position position="140"/>
    </location>
    <ligand>
        <name>Ni(2+)</name>
        <dbReference type="ChEBI" id="CHEBI:49786"/>
        <label>1</label>
    </ligand>
</feature>
<feature type="binding site" description="via carbamate group" evidence="1">
    <location>
        <position position="221"/>
    </location>
    <ligand>
        <name>Ni(2+)</name>
        <dbReference type="ChEBI" id="CHEBI:49786"/>
        <label>1</label>
    </ligand>
</feature>
<feature type="binding site" description="via carbamate group" evidence="1">
    <location>
        <position position="221"/>
    </location>
    <ligand>
        <name>Ni(2+)</name>
        <dbReference type="ChEBI" id="CHEBI:49786"/>
        <label>2</label>
    </ligand>
</feature>
<feature type="binding site" evidence="1">
    <location>
        <position position="223"/>
    </location>
    <ligand>
        <name>substrate</name>
    </ligand>
</feature>
<feature type="binding site" evidence="1">
    <location>
        <position position="250"/>
    </location>
    <ligand>
        <name>Ni(2+)</name>
        <dbReference type="ChEBI" id="CHEBI:49786"/>
        <label>2</label>
    </ligand>
</feature>
<feature type="binding site" evidence="1">
    <location>
        <position position="276"/>
    </location>
    <ligand>
        <name>Ni(2+)</name>
        <dbReference type="ChEBI" id="CHEBI:49786"/>
        <label>2</label>
    </ligand>
</feature>
<feature type="binding site" evidence="1">
    <location>
        <position position="364"/>
    </location>
    <ligand>
        <name>Ni(2+)</name>
        <dbReference type="ChEBI" id="CHEBI:49786"/>
        <label>1</label>
    </ligand>
</feature>
<feature type="modified residue" description="N6-carboxylysine" evidence="1">
    <location>
        <position position="221"/>
    </location>
</feature>
<name>URE1_COREF</name>
<comment type="catalytic activity">
    <reaction evidence="1">
        <text>urea + 2 H2O + H(+) = hydrogencarbonate + 2 NH4(+)</text>
        <dbReference type="Rhea" id="RHEA:20557"/>
        <dbReference type="ChEBI" id="CHEBI:15377"/>
        <dbReference type="ChEBI" id="CHEBI:15378"/>
        <dbReference type="ChEBI" id="CHEBI:16199"/>
        <dbReference type="ChEBI" id="CHEBI:17544"/>
        <dbReference type="ChEBI" id="CHEBI:28938"/>
        <dbReference type="EC" id="3.5.1.5"/>
    </reaction>
</comment>
<comment type="cofactor">
    <cofactor evidence="1">
        <name>Ni cation</name>
        <dbReference type="ChEBI" id="CHEBI:25516"/>
    </cofactor>
    <text evidence="1">Binds 2 nickel ions per subunit.</text>
</comment>
<comment type="pathway">
    <text evidence="1">Nitrogen metabolism; urea degradation; CO(2) and NH(3) from urea (urease route): step 1/1.</text>
</comment>
<comment type="subunit">
    <text evidence="1">Heterotrimer of UreA (gamma), UreB (beta) and UreC (alpha) subunits. Three heterotrimers associate to form the active enzyme.</text>
</comment>
<comment type="subcellular location">
    <subcellularLocation>
        <location evidence="1">Cytoplasm</location>
    </subcellularLocation>
</comment>
<comment type="PTM">
    <text evidence="1">Carboxylation allows a single lysine to coordinate two nickel ions.</text>
</comment>
<comment type="similarity">
    <text evidence="1">Belongs to the metallo-dependent hydrolases superfamily. Urease alpha subunit family.</text>
</comment>
<reference key="1">
    <citation type="journal article" date="2003" name="Genome Res.">
        <title>Comparative complete genome sequence analysis of the amino acid replacements responsible for the thermostability of Corynebacterium efficiens.</title>
        <authorList>
            <person name="Nishio Y."/>
            <person name="Nakamura Y."/>
            <person name="Kawarabayasi Y."/>
            <person name="Usuda Y."/>
            <person name="Kimura E."/>
            <person name="Sugimoto S."/>
            <person name="Matsui K."/>
            <person name="Yamagishi A."/>
            <person name="Kikuchi H."/>
            <person name="Ikeo K."/>
            <person name="Gojobori T."/>
        </authorList>
    </citation>
    <scope>NUCLEOTIDE SEQUENCE [LARGE SCALE GENOMIC DNA]</scope>
    <source>
        <strain>DSM 44549 / YS-314 / AJ 12310 / JCM 11189 / NBRC 100395</strain>
    </source>
</reference>